<reference key="1">
    <citation type="journal article" date="2006" name="PLoS Genet.">
        <title>The complete genome sequence and comparative genome analysis of the high pathogenicity Yersinia enterocolitica strain 8081.</title>
        <authorList>
            <person name="Thomson N.R."/>
            <person name="Howard S."/>
            <person name="Wren B.W."/>
            <person name="Holden M.T.G."/>
            <person name="Crossman L."/>
            <person name="Challis G.L."/>
            <person name="Churcher C."/>
            <person name="Mungall K."/>
            <person name="Brooks K."/>
            <person name="Chillingworth T."/>
            <person name="Feltwell T."/>
            <person name="Abdellah Z."/>
            <person name="Hauser H."/>
            <person name="Jagels K."/>
            <person name="Maddison M."/>
            <person name="Moule S."/>
            <person name="Sanders M."/>
            <person name="Whitehead S."/>
            <person name="Quail M.A."/>
            <person name="Dougan G."/>
            <person name="Parkhill J."/>
            <person name="Prentice M.B."/>
        </authorList>
    </citation>
    <scope>NUCLEOTIDE SEQUENCE [LARGE SCALE GENOMIC DNA]</scope>
    <source>
        <strain>NCTC 13174 / 8081</strain>
    </source>
</reference>
<protein>
    <recommendedName>
        <fullName evidence="1">tRNA modification GTPase MnmE</fullName>
        <ecNumber evidence="1">3.6.-.-</ecNumber>
    </recommendedName>
</protein>
<comment type="function">
    <text evidence="1">Exhibits a very high intrinsic GTPase hydrolysis rate. Involved in the addition of a carboxymethylaminomethyl (cmnm) group at the wobble position (U34) of certain tRNAs, forming tRNA-cmnm(5)s(2)U34.</text>
</comment>
<comment type="cofactor">
    <cofactor evidence="1">
        <name>K(+)</name>
        <dbReference type="ChEBI" id="CHEBI:29103"/>
    </cofactor>
    <text evidence="1">Binds 1 potassium ion per subunit.</text>
</comment>
<comment type="subunit">
    <text evidence="1">Homodimer. Heterotetramer of two MnmE and two MnmG subunits.</text>
</comment>
<comment type="subcellular location">
    <subcellularLocation>
        <location evidence="1">Cytoplasm</location>
    </subcellularLocation>
</comment>
<comment type="similarity">
    <text evidence="1">Belongs to the TRAFAC class TrmE-Era-EngA-EngB-Septin-like GTPase superfamily. TrmE GTPase family.</text>
</comment>
<name>MNME_YERE8</name>
<evidence type="ECO:0000255" key="1">
    <source>
        <dbReference type="HAMAP-Rule" id="MF_00379"/>
    </source>
</evidence>
<dbReference type="EC" id="3.6.-.-" evidence="1"/>
<dbReference type="EMBL" id="AM286415">
    <property type="protein sequence ID" value="CAL14194.1"/>
    <property type="molecule type" value="Genomic_DNA"/>
</dbReference>
<dbReference type="RefSeq" id="WP_005175133.1">
    <property type="nucleotide sequence ID" value="NC_008800.1"/>
</dbReference>
<dbReference type="RefSeq" id="YP_001008312.1">
    <property type="nucleotide sequence ID" value="NC_008800.1"/>
</dbReference>
<dbReference type="SMR" id="A1JT87"/>
<dbReference type="GeneID" id="93971181"/>
<dbReference type="KEGG" id="yen:YE4178"/>
<dbReference type="PATRIC" id="fig|393305.7.peg.4446"/>
<dbReference type="eggNOG" id="COG0486">
    <property type="taxonomic scope" value="Bacteria"/>
</dbReference>
<dbReference type="HOGENOM" id="CLU_019624_4_1_6"/>
<dbReference type="OrthoDB" id="9805918at2"/>
<dbReference type="Proteomes" id="UP000000642">
    <property type="component" value="Chromosome"/>
</dbReference>
<dbReference type="GO" id="GO:0005829">
    <property type="term" value="C:cytosol"/>
    <property type="evidence" value="ECO:0007669"/>
    <property type="project" value="TreeGrafter"/>
</dbReference>
<dbReference type="GO" id="GO:0005525">
    <property type="term" value="F:GTP binding"/>
    <property type="evidence" value="ECO:0007669"/>
    <property type="project" value="UniProtKB-UniRule"/>
</dbReference>
<dbReference type="GO" id="GO:0003924">
    <property type="term" value="F:GTPase activity"/>
    <property type="evidence" value="ECO:0007669"/>
    <property type="project" value="UniProtKB-UniRule"/>
</dbReference>
<dbReference type="GO" id="GO:0046872">
    <property type="term" value="F:metal ion binding"/>
    <property type="evidence" value="ECO:0007669"/>
    <property type="project" value="UniProtKB-KW"/>
</dbReference>
<dbReference type="GO" id="GO:0030488">
    <property type="term" value="P:tRNA methylation"/>
    <property type="evidence" value="ECO:0007669"/>
    <property type="project" value="TreeGrafter"/>
</dbReference>
<dbReference type="GO" id="GO:0002098">
    <property type="term" value="P:tRNA wobble uridine modification"/>
    <property type="evidence" value="ECO:0007669"/>
    <property type="project" value="TreeGrafter"/>
</dbReference>
<dbReference type="CDD" id="cd04164">
    <property type="entry name" value="trmE"/>
    <property type="match status" value="1"/>
</dbReference>
<dbReference type="CDD" id="cd14858">
    <property type="entry name" value="TrmE_N"/>
    <property type="match status" value="1"/>
</dbReference>
<dbReference type="FunFam" id="3.30.1360.120:FF:000001">
    <property type="entry name" value="tRNA modification GTPase MnmE"/>
    <property type="match status" value="1"/>
</dbReference>
<dbReference type="FunFam" id="3.40.50.300:FF:000249">
    <property type="entry name" value="tRNA modification GTPase MnmE"/>
    <property type="match status" value="1"/>
</dbReference>
<dbReference type="Gene3D" id="3.40.50.300">
    <property type="entry name" value="P-loop containing nucleotide triphosphate hydrolases"/>
    <property type="match status" value="1"/>
</dbReference>
<dbReference type="Gene3D" id="3.30.1360.120">
    <property type="entry name" value="Probable tRNA modification gtpase trme, domain 1"/>
    <property type="match status" value="1"/>
</dbReference>
<dbReference type="Gene3D" id="1.20.120.430">
    <property type="entry name" value="tRNA modification GTPase MnmE domain 2"/>
    <property type="match status" value="1"/>
</dbReference>
<dbReference type="HAMAP" id="MF_00379">
    <property type="entry name" value="GTPase_MnmE"/>
    <property type="match status" value="1"/>
</dbReference>
<dbReference type="InterPro" id="IPR031168">
    <property type="entry name" value="G_TrmE"/>
</dbReference>
<dbReference type="InterPro" id="IPR006073">
    <property type="entry name" value="GTP-bd"/>
</dbReference>
<dbReference type="InterPro" id="IPR018948">
    <property type="entry name" value="GTP-bd_TrmE_N"/>
</dbReference>
<dbReference type="InterPro" id="IPR004520">
    <property type="entry name" value="GTPase_MnmE"/>
</dbReference>
<dbReference type="InterPro" id="IPR027368">
    <property type="entry name" value="MnmE_dom2"/>
</dbReference>
<dbReference type="InterPro" id="IPR025867">
    <property type="entry name" value="MnmE_helical"/>
</dbReference>
<dbReference type="InterPro" id="IPR027417">
    <property type="entry name" value="P-loop_NTPase"/>
</dbReference>
<dbReference type="InterPro" id="IPR005225">
    <property type="entry name" value="Small_GTP-bd"/>
</dbReference>
<dbReference type="InterPro" id="IPR027266">
    <property type="entry name" value="TrmE/GcvT_dom1"/>
</dbReference>
<dbReference type="NCBIfam" id="TIGR00450">
    <property type="entry name" value="mnmE_trmE_thdF"/>
    <property type="match status" value="1"/>
</dbReference>
<dbReference type="NCBIfam" id="NF003661">
    <property type="entry name" value="PRK05291.1-3"/>
    <property type="match status" value="1"/>
</dbReference>
<dbReference type="NCBIfam" id="TIGR00231">
    <property type="entry name" value="small_GTP"/>
    <property type="match status" value="1"/>
</dbReference>
<dbReference type="PANTHER" id="PTHR42714">
    <property type="entry name" value="TRNA MODIFICATION GTPASE GTPBP3"/>
    <property type="match status" value="1"/>
</dbReference>
<dbReference type="PANTHER" id="PTHR42714:SF2">
    <property type="entry name" value="TRNA MODIFICATION GTPASE GTPBP3, MITOCHONDRIAL"/>
    <property type="match status" value="1"/>
</dbReference>
<dbReference type="Pfam" id="PF01926">
    <property type="entry name" value="MMR_HSR1"/>
    <property type="match status" value="1"/>
</dbReference>
<dbReference type="Pfam" id="PF12631">
    <property type="entry name" value="MnmE_helical"/>
    <property type="match status" value="1"/>
</dbReference>
<dbReference type="Pfam" id="PF10396">
    <property type="entry name" value="TrmE_N"/>
    <property type="match status" value="1"/>
</dbReference>
<dbReference type="SUPFAM" id="SSF52540">
    <property type="entry name" value="P-loop containing nucleoside triphosphate hydrolases"/>
    <property type="match status" value="1"/>
</dbReference>
<dbReference type="SUPFAM" id="SSF116878">
    <property type="entry name" value="TrmE connector domain"/>
    <property type="match status" value="1"/>
</dbReference>
<dbReference type="PROSITE" id="PS51709">
    <property type="entry name" value="G_TRME"/>
    <property type="match status" value="1"/>
</dbReference>
<keyword id="KW-0963">Cytoplasm</keyword>
<keyword id="KW-0342">GTP-binding</keyword>
<keyword id="KW-0378">Hydrolase</keyword>
<keyword id="KW-0460">Magnesium</keyword>
<keyword id="KW-0479">Metal-binding</keyword>
<keyword id="KW-0547">Nucleotide-binding</keyword>
<keyword id="KW-0630">Potassium</keyword>
<keyword id="KW-0819">tRNA processing</keyword>
<proteinExistence type="inferred from homology"/>
<sequence length="454" mass="48938">MSTTDTIVAQATPPGRGGVGILRVSGRAAATVAQAVLGKLPKPRYADYLPFKDVDGSTLDQGIALYFPGPNSFTGEDVLELQGHGGPVILDLLLKRILALPGLRIARPGEFSERAFLNDKLDLAQAEAIADLIDASSEQAARSAVNSLQGAFSVRIHQLVEALTHLRIYVEAAIDFPDEEIDFLSDGKIEGQLNGVMADLEQVRTEARQGSLLREGMKVVIAGRPNAGKSSLLNALAGREAAIVTDIAGTTRDVLREHIHIDGMPLHIIDTAGLREASDEVERIGIERAWHEIEQADRVLFMVDGTTTDATEPAAIWPEFMARLPATLPITVVRNKADITGETLGLTEVNGHSLIRLSARTGEGIDLLRNHLKQSMGFTSNTEGGFLARRRHLQALETAAQHLAQGHEQLVSAYAGELLAEELRLAQQSLSEITGEFSSDDLLGRIFSSFCIGK</sequence>
<gene>
    <name evidence="1" type="primary">mnmE</name>
    <name evidence="1" type="synonym">trmE</name>
    <name type="ordered locus">YE4178</name>
</gene>
<organism>
    <name type="scientific">Yersinia enterocolitica serotype O:8 / biotype 1B (strain NCTC 13174 / 8081)</name>
    <dbReference type="NCBI Taxonomy" id="393305"/>
    <lineage>
        <taxon>Bacteria</taxon>
        <taxon>Pseudomonadati</taxon>
        <taxon>Pseudomonadota</taxon>
        <taxon>Gammaproteobacteria</taxon>
        <taxon>Enterobacterales</taxon>
        <taxon>Yersiniaceae</taxon>
        <taxon>Yersinia</taxon>
    </lineage>
</organism>
<feature type="chain" id="PRO_1000048908" description="tRNA modification GTPase MnmE">
    <location>
        <begin position="1"/>
        <end position="454"/>
    </location>
</feature>
<feature type="domain" description="TrmE-type G">
    <location>
        <begin position="216"/>
        <end position="377"/>
    </location>
</feature>
<feature type="binding site" evidence="1">
    <location>
        <position position="23"/>
    </location>
    <ligand>
        <name>(6S)-5-formyl-5,6,7,8-tetrahydrofolate</name>
        <dbReference type="ChEBI" id="CHEBI:57457"/>
    </ligand>
</feature>
<feature type="binding site" evidence="1">
    <location>
        <position position="80"/>
    </location>
    <ligand>
        <name>(6S)-5-formyl-5,6,7,8-tetrahydrofolate</name>
        <dbReference type="ChEBI" id="CHEBI:57457"/>
    </ligand>
</feature>
<feature type="binding site" evidence="1">
    <location>
        <position position="120"/>
    </location>
    <ligand>
        <name>(6S)-5-formyl-5,6,7,8-tetrahydrofolate</name>
        <dbReference type="ChEBI" id="CHEBI:57457"/>
    </ligand>
</feature>
<feature type="binding site" evidence="1">
    <location>
        <begin position="226"/>
        <end position="231"/>
    </location>
    <ligand>
        <name>GTP</name>
        <dbReference type="ChEBI" id="CHEBI:37565"/>
    </ligand>
</feature>
<feature type="binding site" evidence="1">
    <location>
        <position position="226"/>
    </location>
    <ligand>
        <name>K(+)</name>
        <dbReference type="ChEBI" id="CHEBI:29103"/>
    </ligand>
</feature>
<feature type="binding site" evidence="1">
    <location>
        <position position="230"/>
    </location>
    <ligand>
        <name>Mg(2+)</name>
        <dbReference type="ChEBI" id="CHEBI:18420"/>
    </ligand>
</feature>
<feature type="binding site" evidence="1">
    <location>
        <begin position="245"/>
        <end position="251"/>
    </location>
    <ligand>
        <name>GTP</name>
        <dbReference type="ChEBI" id="CHEBI:37565"/>
    </ligand>
</feature>
<feature type="binding site" evidence="1">
    <location>
        <position position="245"/>
    </location>
    <ligand>
        <name>K(+)</name>
        <dbReference type="ChEBI" id="CHEBI:29103"/>
    </ligand>
</feature>
<feature type="binding site" evidence="1">
    <location>
        <position position="247"/>
    </location>
    <ligand>
        <name>K(+)</name>
        <dbReference type="ChEBI" id="CHEBI:29103"/>
    </ligand>
</feature>
<feature type="binding site" evidence="1">
    <location>
        <position position="250"/>
    </location>
    <ligand>
        <name>K(+)</name>
        <dbReference type="ChEBI" id="CHEBI:29103"/>
    </ligand>
</feature>
<feature type="binding site" evidence="1">
    <location>
        <position position="251"/>
    </location>
    <ligand>
        <name>Mg(2+)</name>
        <dbReference type="ChEBI" id="CHEBI:18420"/>
    </ligand>
</feature>
<feature type="binding site" evidence="1">
    <location>
        <begin position="270"/>
        <end position="273"/>
    </location>
    <ligand>
        <name>GTP</name>
        <dbReference type="ChEBI" id="CHEBI:37565"/>
    </ligand>
</feature>
<feature type="binding site" evidence="1">
    <location>
        <begin position="335"/>
        <end position="338"/>
    </location>
    <ligand>
        <name>GTP</name>
        <dbReference type="ChEBI" id="CHEBI:37565"/>
    </ligand>
</feature>
<feature type="binding site" evidence="1">
    <location>
        <begin position="358"/>
        <end position="360"/>
    </location>
    <ligand>
        <name>GTP</name>
        <dbReference type="ChEBI" id="CHEBI:37565"/>
    </ligand>
</feature>
<feature type="binding site" evidence="1">
    <location>
        <position position="454"/>
    </location>
    <ligand>
        <name>(6S)-5-formyl-5,6,7,8-tetrahydrofolate</name>
        <dbReference type="ChEBI" id="CHEBI:57457"/>
    </ligand>
</feature>
<accession>A1JT87</accession>